<comment type="function">
    <text evidence="1">NDH-1 shuttles electrons from NADH, via FMN and iron-sulfur (Fe-S) centers, to quinones in the respiratory chain. The immediate electron acceptor for the enzyme in this species is believed to be ubiquinone. Couples the redox reaction to proton translocation (for every two electrons transferred, four hydrogen ions are translocated across the cytoplasmic membrane), and thus conserves the redox energy in a proton gradient.</text>
</comment>
<comment type="catalytic activity">
    <reaction evidence="1">
        <text>a quinone + NADH + 5 H(+)(in) = a quinol + NAD(+) + 4 H(+)(out)</text>
        <dbReference type="Rhea" id="RHEA:57888"/>
        <dbReference type="ChEBI" id="CHEBI:15378"/>
        <dbReference type="ChEBI" id="CHEBI:24646"/>
        <dbReference type="ChEBI" id="CHEBI:57540"/>
        <dbReference type="ChEBI" id="CHEBI:57945"/>
        <dbReference type="ChEBI" id="CHEBI:132124"/>
    </reaction>
</comment>
<comment type="cofactor">
    <cofactor evidence="1">
        <name>[4Fe-4S] cluster</name>
        <dbReference type="ChEBI" id="CHEBI:49883"/>
    </cofactor>
    <text evidence="1">Binds 2 [4Fe-4S] clusters per subunit.</text>
</comment>
<comment type="subunit">
    <text evidence="1">NDH-1 is composed of 13 different subunits. Subunits NuoA, H, J, K, L, M, N constitute the membrane sector of the complex.</text>
</comment>
<comment type="subcellular location">
    <subcellularLocation>
        <location evidence="1">Cell inner membrane</location>
        <topology evidence="1">Peripheral membrane protein</topology>
    </subcellularLocation>
</comment>
<comment type="similarity">
    <text evidence="1">Belongs to the complex I 23 kDa subunit family.</text>
</comment>
<name>NUOI_PSEAB</name>
<proteinExistence type="inferred from homology"/>
<reference key="1">
    <citation type="journal article" date="2006" name="Genome Biol.">
        <title>Genomic analysis reveals that Pseudomonas aeruginosa virulence is combinatorial.</title>
        <authorList>
            <person name="Lee D.G."/>
            <person name="Urbach J.M."/>
            <person name="Wu G."/>
            <person name="Liberati N.T."/>
            <person name="Feinbaum R.L."/>
            <person name="Miyata S."/>
            <person name="Diggins L.T."/>
            <person name="He J."/>
            <person name="Saucier M."/>
            <person name="Deziel E."/>
            <person name="Friedman L."/>
            <person name="Li L."/>
            <person name="Grills G."/>
            <person name="Montgomery K."/>
            <person name="Kucherlapati R."/>
            <person name="Rahme L.G."/>
            <person name="Ausubel F.M."/>
        </authorList>
    </citation>
    <scope>NUCLEOTIDE SEQUENCE [LARGE SCALE GENOMIC DNA]</scope>
    <source>
        <strain>UCBPP-PA14</strain>
    </source>
</reference>
<gene>
    <name evidence="1" type="primary">nuoI</name>
    <name type="ordered locus">PA14_29920</name>
</gene>
<sequence length="182" mass="20610">MIKEIINVVHGTFTQLRSLVMIFGHAFRKRDTLQYPEEPVYLPPRYRGRIVLTRDPDGEERCVACNLCAVACPVGCISLQKAETEDGRWYPEFFRINFSRCIFCGLCEEACPTTAIQLTPDFEMGEFKRQDLVYEKHDLLISGPGKNPDYNYYRVAGMAIAGKPKGAAQNEAEPINVKSLLP</sequence>
<dbReference type="EC" id="7.1.1.-" evidence="1"/>
<dbReference type="EMBL" id="CP000438">
    <property type="protein sequence ID" value="ABJ11867.1"/>
    <property type="molecule type" value="Genomic_DNA"/>
</dbReference>
<dbReference type="RefSeq" id="WP_003090467.1">
    <property type="nucleotide sequence ID" value="NZ_CP034244.1"/>
</dbReference>
<dbReference type="SMR" id="Q02ND6"/>
<dbReference type="GeneID" id="77220819"/>
<dbReference type="KEGG" id="pau:PA14_29920"/>
<dbReference type="PseudoCAP" id="PA14_29920"/>
<dbReference type="HOGENOM" id="CLU_067218_4_3_6"/>
<dbReference type="BioCyc" id="PAER208963:G1G74-2506-MONOMER"/>
<dbReference type="Proteomes" id="UP000000653">
    <property type="component" value="Chromosome"/>
</dbReference>
<dbReference type="GO" id="GO:0005886">
    <property type="term" value="C:plasma membrane"/>
    <property type="evidence" value="ECO:0007669"/>
    <property type="project" value="UniProtKB-SubCell"/>
</dbReference>
<dbReference type="GO" id="GO:0051539">
    <property type="term" value="F:4 iron, 4 sulfur cluster binding"/>
    <property type="evidence" value="ECO:0007669"/>
    <property type="project" value="UniProtKB-KW"/>
</dbReference>
<dbReference type="GO" id="GO:0005506">
    <property type="term" value="F:iron ion binding"/>
    <property type="evidence" value="ECO:0007669"/>
    <property type="project" value="UniProtKB-UniRule"/>
</dbReference>
<dbReference type="GO" id="GO:0050136">
    <property type="term" value="F:NADH:ubiquinone reductase (non-electrogenic) activity"/>
    <property type="evidence" value="ECO:0007669"/>
    <property type="project" value="UniProtKB-UniRule"/>
</dbReference>
<dbReference type="GO" id="GO:0048038">
    <property type="term" value="F:quinone binding"/>
    <property type="evidence" value="ECO:0007669"/>
    <property type="project" value="UniProtKB-KW"/>
</dbReference>
<dbReference type="GO" id="GO:0009060">
    <property type="term" value="P:aerobic respiration"/>
    <property type="evidence" value="ECO:0007669"/>
    <property type="project" value="TreeGrafter"/>
</dbReference>
<dbReference type="FunFam" id="3.30.70.3270:FF:000002">
    <property type="entry name" value="NADH-quinone oxidoreductase subunit I"/>
    <property type="match status" value="1"/>
</dbReference>
<dbReference type="Gene3D" id="3.30.70.3270">
    <property type="match status" value="1"/>
</dbReference>
<dbReference type="HAMAP" id="MF_01351">
    <property type="entry name" value="NDH1_NuoI"/>
    <property type="match status" value="1"/>
</dbReference>
<dbReference type="InterPro" id="IPR017896">
    <property type="entry name" value="4Fe4S_Fe-S-bd"/>
</dbReference>
<dbReference type="InterPro" id="IPR017900">
    <property type="entry name" value="4Fe4S_Fe_S_CS"/>
</dbReference>
<dbReference type="InterPro" id="IPR010226">
    <property type="entry name" value="NADH_quinone_OxRdtase_chainI"/>
</dbReference>
<dbReference type="NCBIfam" id="TIGR01971">
    <property type="entry name" value="NuoI"/>
    <property type="match status" value="1"/>
</dbReference>
<dbReference type="NCBIfam" id="NF004536">
    <property type="entry name" value="PRK05888.1-1"/>
    <property type="match status" value="1"/>
</dbReference>
<dbReference type="PANTHER" id="PTHR10849:SF20">
    <property type="entry name" value="NADH DEHYDROGENASE [UBIQUINONE] IRON-SULFUR PROTEIN 8, MITOCHONDRIAL"/>
    <property type="match status" value="1"/>
</dbReference>
<dbReference type="PANTHER" id="PTHR10849">
    <property type="entry name" value="NADH DEHYDROGENASE UBIQUINONE IRON-SULFUR PROTEIN 8, MITOCHONDRIAL"/>
    <property type="match status" value="1"/>
</dbReference>
<dbReference type="Pfam" id="PF12838">
    <property type="entry name" value="Fer4_7"/>
    <property type="match status" value="1"/>
</dbReference>
<dbReference type="SUPFAM" id="SSF54862">
    <property type="entry name" value="4Fe-4S ferredoxins"/>
    <property type="match status" value="1"/>
</dbReference>
<dbReference type="PROSITE" id="PS00198">
    <property type="entry name" value="4FE4S_FER_1"/>
    <property type="match status" value="2"/>
</dbReference>
<dbReference type="PROSITE" id="PS51379">
    <property type="entry name" value="4FE4S_FER_2"/>
    <property type="match status" value="2"/>
</dbReference>
<protein>
    <recommendedName>
        <fullName evidence="1">NADH-quinone oxidoreductase subunit I</fullName>
        <ecNumber evidence="1">7.1.1.-</ecNumber>
    </recommendedName>
    <alternativeName>
        <fullName evidence="1">NADH dehydrogenase I subunit I</fullName>
    </alternativeName>
    <alternativeName>
        <fullName evidence="1">NDH-1 subunit I</fullName>
    </alternativeName>
</protein>
<feature type="chain" id="PRO_0000298536" description="NADH-quinone oxidoreductase subunit I">
    <location>
        <begin position="1"/>
        <end position="182"/>
    </location>
</feature>
<feature type="domain" description="4Fe-4S ferredoxin-type 1" evidence="1">
    <location>
        <begin position="52"/>
        <end position="82"/>
    </location>
</feature>
<feature type="domain" description="4Fe-4S ferredoxin-type 2" evidence="1">
    <location>
        <begin position="92"/>
        <end position="121"/>
    </location>
</feature>
<feature type="binding site" evidence="1">
    <location>
        <position position="62"/>
    </location>
    <ligand>
        <name>[4Fe-4S] cluster</name>
        <dbReference type="ChEBI" id="CHEBI:49883"/>
        <label>1</label>
    </ligand>
</feature>
<feature type="binding site" evidence="1">
    <location>
        <position position="65"/>
    </location>
    <ligand>
        <name>[4Fe-4S] cluster</name>
        <dbReference type="ChEBI" id="CHEBI:49883"/>
        <label>1</label>
    </ligand>
</feature>
<feature type="binding site" evidence="1">
    <location>
        <position position="68"/>
    </location>
    <ligand>
        <name>[4Fe-4S] cluster</name>
        <dbReference type="ChEBI" id="CHEBI:49883"/>
        <label>1</label>
    </ligand>
</feature>
<feature type="binding site" evidence="1">
    <location>
        <position position="72"/>
    </location>
    <ligand>
        <name>[4Fe-4S] cluster</name>
        <dbReference type="ChEBI" id="CHEBI:49883"/>
        <label>2</label>
    </ligand>
</feature>
<feature type="binding site" evidence="1">
    <location>
        <position position="101"/>
    </location>
    <ligand>
        <name>[4Fe-4S] cluster</name>
        <dbReference type="ChEBI" id="CHEBI:49883"/>
        <label>2</label>
    </ligand>
</feature>
<feature type="binding site" evidence="1">
    <location>
        <position position="104"/>
    </location>
    <ligand>
        <name>[4Fe-4S] cluster</name>
        <dbReference type="ChEBI" id="CHEBI:49883"/>
        <label>2</label>
    </ligand>
</feature>
<feature type="binding site" evidence="1">
    <location>
        <position position="107"/>
    </location>
    <ligand>
        <name>[4Fe-4S] cluster</name>
        <dbReference type="ChEBI" id="CHEBI:49883"/>
        <label>2</label>
    </ligand>
</feature>
<feature type="binding site" evidence="1">
    <location>
        <position position="111"/>
    </location>
    <ligand>
        <name>[4Fe-4S] cluster</name>
        <dbReference type="ChEBI" id="CHEBI:49883"/>
        <label>1</label>
    </ligand>
</feature>
<organism>
    <name type="scientific">Pseudomonas aeruginosa (strain UCBPP-PA14)</name>
    <dbReference type="NCBI Taxonomy" id="208963"/>
    <lineage>
        <taxon>Bacteria</taxon>
        <taxon>Pseudomonadati</taxon>
        <taxon>Pseudomonadota</taxon>
        <taxon>Gammaproteobacteria</taxon>
        <taxon>Pseudomonadales</taxon>
        <taxon>Pseudomonadaceae</taxon>
        <taxon>Pseudomonas</taxon>
    </lineage>
</organism>
<keyword id="KW-0004">4Fe-4S</keyword>
<keyword id="KW-0997">Cell inner membrane</keyword>
<keyword id="KW-1003">Cell membrane</keyword>
<keyword id="KW-0408">Iron</keyword>
<keyword id="KW-0411">Iron-sulfur</keyword>
<keyword id="KW-0472">Membrane</keyword>
<keyword id="KW-0479">Metal-binding</keyword>
<keyword id="KW-0520">NAD</keyword>
<keyword id="KW-0874">Quinone</keyword>
<keyword id="KW-0677">Repeat</keyword>
<keyword id="KW-1278">Translocase</keyword>
<keyword id="KW-0830">Ubiquinone</keyword>
<evidence type="ECO:0000255" key="1">
    <source>
        <dbReference type="HAMAP-Rule" id="MF_01351"/>
    </source>
</evidence>
<accession>Q02ND6</accession>